<organism>
    <name type="scientific">Dictyostelium discoideum</name>
    <name type="common">Social amoeba</name>
    <dbReference type="NCBI Taxonomy" id="44689"/>
    <lineage>
        <taxon>Eukaryota</taxon>
        <taxon>Amoebozoa</taxon>
        <taxon>Evosea</taxon>
        <taxon>Eumycetozoa</taxon>
        <taxon>Dictyostelia</taxon>
        <taxon>Dictyosteliales</taxon>
        <taxon>Dictyosteliaceae</taxon>
        <taxon>Dictyostelium</taxon>
    </lineage>
</organism>
<evidence type="ECO:0000250" key="1"/>
<evidence type="ECO:0000250" key="2">
    <source>
        <dbReference type="UniProtKB" id="P0A029"/>
    </source>
</evidence>
<evidence type="ECO:0000269" key="3">
    <source>
    </source>
</evidence>
<evidence type="ECO:0000305" key="4"/>
<name>FTSZB_DICDI</name>
<feature type="chain" id="PRO_0000327693" description="Mitochondrial division protein fszB">
    <location>
        <begin position="1"/>
        <end position="366"/>
    </location>
</feature>
<feature type="binding site" evidence="2">
    <location>
        <begin position="70"/>
        <end position="74"/>
    </location>
    <ligand>
        <name>GTP</name>
        <dbReference type="ChEBI" id="CHEBI:37565"/>
    </ligand>
</feature>
<feature type="binding site" evidence="2">
    <location>
        <begin position="157"/>
        <end position="159"/>
    </location>
    <ligand>
        <name>GTP</name>
        <dbReference type="ChEBI" id="CHEBI:37565"/>
    </ligand>
</feature>
<feature type="binding site" evidence="2">
    <location>
        <position position="190"/>
    </location>
    <ligand>
        <name>GTP</name>
        <dbReference type="ChEBI" id="CHEBI:37565"/>
    </ligand>
</feature>
<feature type="binding site" evidence="2">
    <location>
        <position position="238"/>
    </location>
    <ligand>
        <name>GTP</name>
        <dbReference type="ChEBI" id="CHEBI:37565"/>
    </ligand>
</feature>
<proteinExistence type="inferred from homology"/>
<keyword id="KW-0342">GTP-binding</keyword>
<keyword id="KW-0496">Mitochondrion</keyword>
<keyword id="KW-0547">Nucleotide-binding</keyword>
<keyword id="KW-1185">Reference proteome</keyword>
<accession>Q9GPZ7</accession>
<accession>Q55C22</accession>
<gene>
    <name type="primary">fszB</name>
    <name type="synonym">ftsZB</name>
    <name type="ORF">DDB_G0269224</name>
</gene>
<dbReference type="EMBL" id="AF304441">
    <property type="protein sequence ID" value="AAG37881.1"/>
    <property type="molecule type" value="Genomic_DNA"/>
</dbReference>
<dbReference type="EMBL" id="AAFI02000005">
    <property type="protein sequence ID" value="EAL71962.1"/>
    <property type="molecule type" value="Genomic_DNA"/>
</dbReference>
<dbReference type="RefSeq" id="XP_646659.1">
    <property type="nucleotide sequence ID" value="XM_641567.1"/>
</dbReference>
<dbReference type="SMR" id="Q9GPZ7"/>
<dbReference type="STRING" id="44689.Q9GPZ7"/>
<dbReference type="PaxDb" id="44689-DDB0191117"/>
<dbReference type="EnsemblProtists" id="EAL71962">
    <property type="protein sequence ID" value="EAL71962"/>
    <property type="gene ID" value="DDB_G0269224"/>
</dbReference>
<dbReference type="GeneID" id="8617631"/>
<dbReference type="KEGG" id="ddi:DDB_G0269224"/>
<dbReference type="dictyBase" id="DDB_G0269224">
    <property type="gene designation" value="fszB"/>
</dbReference>
<dbReference type="VEuPathDB" id="AmoebaDB:DDB_G0269224"/>
<dbReference type="eggNOG" id="ENOG502QRFN">
    <property type="taxonomic scope" value="Eukaryota"/>
</dbReference>
<dbReference type="HOGENOM" id="CLU_024865_0_1_1"/>
<dbReference type="InParanoid" id="Q9GPZ7"/>
<dbReference type="OMA" id="ENHAMNI"/>
<dbReference type="PhylomeDB" id="Q9GPZ7"/>
<dbReference type="PRO" id="PR:Q9GPZ7"/>
<dbReference type="Proteomes" id="UP000002195">
    <property type="component" value="Chromosome 1"/>
</dbReference>
<dbReference type="GO" id="GO:0032153">
    <property type="term" value="C:cell division site"/>
    <property type="evidence" value="ECO:0000318"/>
    <property type="project" value="GO_Central"/>
</dbReference>
<dbReference type="GO" id="GO:0005737">
    <property type="term" value="C:cytoplasm"/>
    <property type="evidence" value="ECO:0000318"/>
    <property type="project" value="GO_Central"/>
</dbReference>
<dbReference type="GO" id="GO:0005759">
    <property type="term" value="C:mitochondrial matrix"/>
    <property type="evidence" value="ECO:0000314"/>
    <property type="project" value="dictyBase"/>
</dbReference>
<dbReference type="GO" id="GO:0005525">
    <property type="term" value="F:GTP binding"/>
    <property type="evidence" value="ECO:0000318"/>
    <property type="project" value="GO_Central"/>
</dbReference>
<dbReference type="GO" id="GO:0003924">
    <property type="term" value="F:GTPase activity"/>
    <property type="evidence" value="ECO:0000318"/>
    <property type="project" value="GO_Central"/>
</dbReference>
<dbReference type="GO" id="GO:0051301">
    <property type="term" value="P:cell division"/>
    <property type="evidence" value="ECO:0000318"/>
    <property type="project" value="GO_Central"/>
</dbReference>
<dbReference type="GO" id="GO:0007005">
    <property type="term" value="P:mitochondrion organization"/>
    <property type="evidence" value="ECO:0000315"/>
    <property type="project" value="dictyBase"/>
</dbReference>
<dbReference type="GO" id="GO:0090258">
    <property type="term" value="P:negative regulation of mitochondrial fission"/>
    <property type="evidence" value="ECO:0000315"/>
    <property type="project" value="dictyBase"/>
</dbReference>
<dbReference type="GO" id="GO:0010637">
    <property type="term" value="P:negative regulation of mitochondrial fusion"/>
    <property type="evidence" value="ECO:0000315"/>
    <property type="project" value="dictyBase"/>
</dbReference>
<dbReference type="GO" id="GO:0048285">
    <property type="term" value="P:organelle fission"/>
    <property type="evidence" value="ECO:0000318"/>
    <property type="project" value="GO_Central"/>
</dbReference>
<dbReference type="CDD" id="cd02201">
    <property type="entry name" value="FtsZ_type1"/>
    <property type="match status" value="1"/>
</dbReference>
<dbReference type="FunFam" id="3.40.50.1440:FF:000052">
    <property type="entry name" value="Tubulin/FtsZ GTPase"/>
    <property type="match status" value="1"/>
</dbReference>
<dbReference type="Gene3D" id="3.40.50.1440">
    <property type="entry name" value="Tubulin/FtsZ, GTPase domain"/>
    <property type="match status" value="1"/>
</dbReference>
<dbReference type="HAMAP" id="MF_00909">
    <property type="entry name" value="FtsZ"/>
    <property type="match status" value="1"/>
</dbReference>
<dbReference type="InterPro" id="IPR000158">
    <property type="entry name" value="Cell_div_FtsZ"/>
</dbReference>
<dbReference type="InterPro" id="IPR020805">
    <property type="entry name" value="Cell_div_FtsZ_CS"/>
</dbReference>
<dbReference type="InterPro" id="IPR045061">
    <property type="entry name" value="FtsZ/CetZ"/>
</dbReference>
<dbReference type="InterPro" id="IPR024757">
    <property type="entry name" value="FtsZ_C"/>
</dbReference>
<dbReference type="InterPro" id="IPR008280">
    <property type="entry name" value="Tub_FtsZ_C"/>
</dbReference>
<dbReference type="InterPro" id="IPR018316">
    <property type="entry name" value="Tubulin/FtsZ_2-layer-sand-dom"/>
</dbReference>
<dbReference type="InterPro" id="IPR036525">
    <property type="entry name" value="Tubulin/FtsZ_GTPase_sf"/>
</dbReference>
<dbReference type="InterPro" id="IPR003008">
    <property type="entry name" value="Tubulin_FtsZ_GTPase"/>
</dbReference>
<dbReference type="NCBIfam" id="TIGR00065">
    <property type="entry name" value="ftsZ"/>
    <property type="match status" value="1"/>
</dbReference>
<dbReference type="PANTHER" id="PTHR30314">
    <property type="entry name" value="CELL DIVISION PROTEIN FTSZ-RELATED"/>
    <property type="match status" value="1"/>
</dbReference>
<dbReference type="PANTHER" id="PTHR30314:SF4">
    <property type="entry name" value="MITOCHONDRIAL DIVISION PROTEIN FSZB"/>
    <property type="match status" value="1"/>
</dbReference>
<dbReference type="Pfam" id="PF12327">
    <property type="entry name" value="FtsZ_C"/>
    <property type="match status" value="1"/>
</dbReference>
<dbReference type="Pfam" id="PF00091">
    <property type="entry name" value="Tubulin"/>
    <property type="match status" value="1"/>
</dbReference>
<dbReference type="PRINTS" id="PR00423">
    <property type="entry name" value="CELLDVISFTSZ"/>
</dbReference>
<dbReference type="SMART" id="SM00864">
    <property type="entry name" value="Tubulin"/>
    <property type="match status" value="1"/>
</dbReference>
<dbReference type="SMART" id="SM00865">
    <property type="entry name" value="Tubulin_C"/>
    <property type="match status" value="1"/>
</dbReference>
<dbReference type="SUPFAM" id="SSF55307">
    <property type="entry name" value="Tubulin C-terminal domain-like"/>
    <property type="match status" value="1"/>
</dbReference>
<dbReference type="SUPFAM" id="SSF52490">
    <property type="entry name" value="Tubulin nucleotide-binding domain-like"/>
    <property type="match status" value="1"/>
</dbReference>
<dbReference type="PROSITE" id="PS01134">
    <property type="entry name" value="FTSZ_1"/>
    <property type="match status" value="1"/>
</dbReference>
<dbReference type="PROSITE" id="PS01135">
    <property type="entry name" value="FTSZ_2"/>
    <property type="match status" value="1"/>
</dbReference>
<protein>
    <recommendedName>
        <fullName>Mitochondrial division protein fszB</fullName>
    </recommendedName>
</protein>
<sequence>MTILNRFCRTILLTNLELTNCGIRKNNSYKCRSFTHTINIDTNHIVPIHTQSNITLELFQPKISVVGVGGGGGNAVNHMISQSLEGVEFFVCNTDSQDLIKSNSINKIQLGPQLTKGHGAGANPEKGRLAAEESKNKIIQTFKDTDLLFLAAGMGGGTGTGSSPIIAKTIKEFKKETIIVGVVTVPFNFEGKRKEIIAKKGLEELSKYVDTLVVISNQNLLDASKSDIQLEQAFLMVDEILHTGIRSIANIINVPGMINLDYSDVVNILKNRKGLSRIGFGEASGEDRAYKAVHKAIKNPLIEIDDQKFTGLLVNISGGNDITLNEISKTINYLQQNADPDVQVFVGHTVDNSLLGKIRISCLFVH</sequence>
<comment type="function">
    <text evidence="1">Probably involved in mitochondrion division process. Binds to and hydrolyzes GTP (By similarity).</text>
</comment>
<comment type="subcellular location">
    <subcellularLocation>
        <location evidence="3">Mitochondrion</location>
    </subcellularLocation>
    <text>Locates to a submitochondrial body usually located at one end of the organelle.</text>
</comment>
<comment type="similarity">
    <text evidence="4">Belongs to the FtsZ family.</text>
</comment>
<reference key="1">
    <citation type="journal article" date="2003" name="Eukaryot. Cell">
        <title>Two Dictyostelium orthologs of the prokaryotic cell division protein FtsZ localize to mitochondria and are required for the maintenance of normal mitochondrial morphology.</title>
        <authorList>
            <person name="Gilson P.R."/>
            <person name="Yu X.-C."/>
            <person name="Hereld D."/>
            <person name="Barth C."/>
            <person name="Savage A."/>
            <person name="Kiefel B.R."/>
            <person name="Lay S."/>
            <person name="Fisher P.R."/>
            <person name="Margolin W."/>
            <person name="Beech P.L."/>
        </authorList>
    </citation>
    <scope>NUCLEOTIDE SEQUENCE [GENOMIC DNA]</scope>
    <scope>SUBCELLULAR LOCATION</scope>
</reference>
<reference key="2">
    <citation type="journal article" date="2005" name="Nature">
        <title>The genome of the social amoeba Dictyostelium discoideum.</title>
        <authorList>
            <person name="Eichinger L."/>
            <person name="Pachebat J.A."/>
            <person name="Gloeckner G."/>
            <person name="Rajandream M.A."/>
            <person name="Sucgang R."/>
            <person name="Berriman M."/>
            <person name="Song J."/>
            <person name="Olsen R."/>
            <person name="Szafranski K."/>
            <person name="Xu Q."/>
            <person name="Tunggal B."/>
            <person name="Kummerfeld S."/>
            <person name="Madera M."/>
            <person name="Konfortov B.A."/>
            <person name="Rivero F."/>
            <person name="Bankier A.T."/>
            <person name="Lehmann R."/>
            <person name="Hamlin N."/>
            <person name="Davies R."/>
            <person name="Gaudet P."/>
            <person name="Fey P."/>
            <person name="Pilcher K."/>
            <person name="Chen G."/>
            <person name="Saunders D."/>
            <person name="Sodergren E.J."/>
            <person name="Davis P."/>
            <person name="Kerhornou A."/>
            <person name="Nie X."/>
            <person name="Hall N."/>
            <person name="Anjard C."/>
            <person name="Hemphill L."/>
            <person name="Bason N."/>
            <person name="Farbrother P."/>
            <person name="Desany B."/>
            <person name="Just E."/>
            <person name="Morio T."/>
            <person name="Rost R."/>
            <person name="Churcher C.M."/>
            <person name="Cooper J."/>
            <person name="Haydock S."/>
            <person name="van Driessche N."/>
            <person name="Cronin A."/>
            <person name="Goodhead I."/>
            <person name="Muzny D.M."/>
            <person name="Mourier T."/>
            <person name="Pain A."/>
            <person name="Lu M."/>
            <person name="Harper D."/>
            <person name="Lindsay R."/>
            <person name="Hauser H."/>
            <person name="James K.D."/>
            <person name="Quiles M."/>
            <person name="Madan Babu M."/>
            <person name="Saito T."/>
            <person name="Buchrieser C."/>
            <person name="Wardroper A."/>
            <person name="Felder M."/>
            <person name="Thangavelu M."/>
            <person name="Johnson D."/>
            <person name="Knights A."/>
            <person name="Loulseged H."/>
            <person name="Mungall K.L."/>
            <person name="Oliver K."/>
            <person name="Price C."/>
            <person name="Quail M.A."/>
            <person name="Urushihara H."/>
            <person name="Hernandez J."/>
            <person name="Rabbinowitsch E."/>
            <person name="Steffen D."/>
            <person name="Sanders M."/>
            <person name="Ma J."/>
            <person name="Kohara Y."/>
            <person name="Sharp S."/>
            <person name="Simmonds M.N."/>
            <person name="Spiegler S."/>
            <person name="Tivey A."/>
            <person name="Sugano S."/>
            <person name="White B."/>
            <person name="Walker D."/>
            <person name="Woodward J.R."/>
            <person name="Winckler T."/>
            <person name="Tanaka Y."/>
            <person name="Shaulsky G."/>
            <person name="Schleicher M."/>
            <person name="Weinstock G.M."/>
            <person name="Rosenthal A."/>
            <person name="Cox E.C."/>
            <person name="Chisholm R.L."/>
            <person name="Gibbs R.A."/>
            <person name="Loomis W.F."/>
            <person name="Platzer M."/>
            <person name="Kay R.R."/>
            <person name="Williams J.G."/>
            <person name="Dear P.H."/>
            <person name="Noegel A.A."/>
            <person name="Barrell B.G."/>
            <person name="Kuspa A."/>
        </authorList>
    </citation>
    <scope>NUCLEOTIDE SEQUENCE [LARGE SCALE GENOMIC DNA]</scope>
    <source>
        <strain>AX4</strain>
    </source>
</reference>